<feature type="chain" id="PRO_1000020069" description="Methionyl-tRNA formyltransferase">
    <location>
        <begin position="1"/>
        <end position="311"/>
    </location>
</feature>
<feature type="binding site" evidence="1">
    <location>
        <begin position="112"/>
        <end position="115"/>
    </location>
    <ligand>
        <name>(6S)-5,6,7,8-tetrahydrofolate</name>
        <dbReference type="ChEBI" id="CHEBI:57453"/>
    </ligand>
</feature>
<proteinExistence type="inferred from homology"/>
<accession>Q39QC2</accession>
<keyword id="KW-0648">Protein biosynthesis</keyword>
<keyword id="KW-1185">Reference proteome</keyword>
<keyword id="KW-0808">Transferase</keyword>
<comment type="function">
    <text evidence="1">Attaches a formyl group to the free amino group of methionyl-tRNA(fMet). The formyl group appears to play a dual role in the initiator identity of N-formylmethionyl-tRNA by promoting its recognition by IF2 and preventing the misappropriation of this tRNA by the elongation apparatus.</text>
</comment>
<comment type="catalytic activity">
    <reaction evidence="1">
        <text>L-methionyl-tRNA(fMet) + (6R)-10-formyltetrahydrofolate = N-formyl-L-methionyl-tRNA(fMet) + (6S)-5,6,7,8-tetrahydrofolate + H(+)</text>
        <dbReference type="Rhea" id="RHEA:24380"/>
        <dbReference type="Rhea" id="RHEA-COMP:9952"/>
        <dbReference type="Rhea" id="RHEA-COMP:9953"/>
        <dbReference type="ChEBI" id="CHEBI:15378"/>
        <dbReference type="ChEBI" id="CHEBI:57453"/>
        <dbReference type="ChEBI" id="CHEBI:78530"/>
        <dbReference type="ChEBI" id="CHEBI:78844"/>
        <dbReference type="ChEBI" id="CHEBI:195366"/>
        <dbReference type="EC" id="2.1.2.9"/>
    </reaction>
</comment>
<comment type="similarity">
    <text evidence="1">Belongs to the Fmt family.</text>
</comment>
<organism>
    <name type="scientific">Geobacter metallireducens (strain ATCC 53774 / DSM 7210 / GS-15)</name>
    <dbReference type="NCBI Taxonomy" id="269799"/>
    <lineage>
        <taxon>Bacteria</taxon>
        <taxon>Pseudomonadati</taxon>
        <taxon>Thermodesulfobacteriota</taxon>
        <taxon>Desulfuromonadia</taxon>
        <taxon>Geobacterales</taxon>
        <taxon>Geobacteraceae</taxon>
        <taxon>Geobacter</taxon>
    </lineage>
</organism>
<protein>
    <recommendedName>
        <fullName evidence="1">Methionyl-tRNA formyltransferase</fullName>
        <ecNumber evidence="1">2.1.2.9</ecNumber>
    </recommendedName>
</protein>
<evidence type="ECO:0000255" key="1">
    <source>
        <dbReference type="HAMAP-Rule" id="MF_00182"/>
    </source>
</evidence>
<reference key="1">
    <citation type="journal article" date="2009" name="BMC Microbiol.">
        <title>The genome sequence of Geobacter metallireducens: features of metabolism, physiology and regulation common and dissimilar to Geobacter sulfurreducens.</title>
        <authorList>
            <person name="Aklujkar M."/>
            <person name="Krushkal J."/>
            <person name="DiBartolo G."/>
            <person name="Lapidus A."/>
            <person name="Land M.L."/>
            <person name="Lovley D.R."/>
        </authorList>
    </citation>
    <scope>NUCLEOTIDE SEQUENCE [LARGE SCALE GENOMIC DNA]</scope>
    <source>
        <strain>ATCC 53774 / DSM 7210 / GS-15</strain>
    </source>
</reference>
<gene>
    <name evidence="1" type="primary">fmt</name>
    <name type="ordered locus">Gmet_3339</name>
</gene>
<sequence length="311" mass="33905">MAGLSIIFMGTPDFACPTLTRLIERGEDVIAVVTQPDRPKGRGQKLVPPPVKVIAEEHGIPVLQPQKVRAPEVVAQIRELNPDLIVVVAFGQILPQSLLEIPRHGCINIHASLLPRYRGAAPINWCLINGETETGITTMQMDAGLDTGDMLVKRSISIGPDEDAQSLHDRLSLLGAETIDETLDRLQVGTLTREKQDDALTCYAPMLKKEDGLIDWKQEPQQIKNLVRGFTPWPGAYTTLDGKTLKLYKVSVATECGKPGDIMAVGKDGIIVGCGSGSLRIEELQLEGRKRLSAQDFLAGCRLEPGIRLGH</sequence>
<dbReference type="EC" id="2.1.2.9" evidence="1"/>
<dbReference type="EMBL" id="CP000148">
    <property type="protein sequence ID" value="ABB33552.1"/>
    <property type="molecule type" value="Genomic_DNA"/>
</dbReference>
<dbReference type="RefSeq" id="WP_004512564.1">
    <property type="nucleotide sequence ID" value="NC_007517.1"/>
</dbReference>
<dbReference type="SMR" id="Q39QC2"/>
<dbReference type="STRING" id="269799.Gmet_3339"/>
<dbReference type="KEGG" id="gme:Gmet_3339"/>
<dbReference type="eggNOG" id="COG0223">
    <property type="taxonomic scope" value="Bacteria"/>
</dbReference>
<dbReference type="HOGENOM" id="CLU_033347_1_1_7"/>
<dbReference type="Proteomes" id="UP000007073">
    <property type="component" value="Chromosome"/>
</dbReference>
<dbReference type="GO" id="GO:0005829">
    <property type="term" value="C:cytosol"/>
    <property type="evidence" value="ECO:0007669"/>
    <property type="project" value="TreeGrafter"/>
</dbReference>
<dbReference type="GO" id="GO:0004479">
    <property type="term" value="F:methionyl-tRNA formyltransferase activity"/>
    <property type="evidence" value="ECO:0007669"/>
    <property type="project" value="UniProtKB-UniRule"/>
</dbReference>
<dbReference type="CDD" id="cd08646">
    <property type="entry name" value="FMT_core_Met-tRNA-FMT_N"/>
    <property type="match status" value="1"/>
</dbReference>
<dbReference type="CDD" id="cd08704">
    <property type="entry name" value="Met_tRNA_FMT_C"/>
    <property type="match status" value="1"/>
</dbReference>
<dbReference type="Gene3D" id="3.10.25.10">
    <property type="entry name" value="Formyl transferase, C-terminal domain"/>
    <property type="match status" value="1"/>
</dbReference>
<dbReference type="Gene3D" id="3.40.50.170">
    <property type="entry name" value="Formyl transferase, N-terminal domain"/>
    <property type="match status" value="1"/>
</dbReference>
<dbReference type="HAMAP" id="MF_00182">
    <property type="entry name" value="Formyl_trans"/>
    <property type="match status" value="1"/>
</dbReference>
<dbReference type="InterPro" id="IPR005794">
    <property type="entry name" value="Fmt"/>
</dbReference>
<dbReference type="InterPro" id="IPR005793">
    <property type="entry name" value="Formyl_trans_C"/>
</dbReference>
<dbReference type="InterPro" id="IPR037022">
    <property type="entry name" value="Formyl_trans_C_sf"/>
</dbReference>
<dbReference type="InterPro" id="IPR002376">
    <property type="entry name" value="Formyl_transf_N"/>
</dbReference>
<dbReference type="InterPro" id="IPR036477">
    <property type="entry name" value="Formyl_transf_N_sf"/>
</dbReference>
<dbReference type="InterPro" id="IPR011034">
    <property type="entry name" value="Formyl_transferase-like_C_sf"/>
</dbReference>
<dbReference type="InterPro" id="IPR001555">
    <property type="entry name" value="GART_AS"/>
</dbReference>
<dbReference type="InterPro" id="IPR044135">
    <property type="entry name" value="Met-tRNA-FMT_C"/>
</dbReference>
<dbReference type="InterPro" id="IPR041711">
    <property type="entry name" value="Met-tRNA-FMT_N"/>
</dbReference>
<dbReference type="NCBIfam" id="TIGR00460">
    <property type="entry name" value="fmt"/>
    <property type="match status" value="1"/>
</dbReference>
<dbReference type="PANTHER" id="PTHR11138">
    <property type="entry name" value="METHIONYL-TRNA FORMYLTRANSFERASE"/>
    <property type="match status" value="1"/>
</dbReference>
<dbReference type="PANTHER" id="PTHR11138:SF5">
    <property type="entry name" value="METHIONYL-TRNA FORMYLTRANSFERASE, MITOCHONDRIAL"/>
    <property type="match status" value="1"/>
</dbReference>
<dbReference type="Pfam" id="PF02911">
    <property type="entry name" value="Formyl_trans_C"/>
    <property type="match status" value="1"/>
</dbReference>
<dbReference type="Pfam" id="PF00551">
    <property type="entry name" value="Formyl_trans_N"/>
    <property type="match status" value="1"/>
</dbReference>
<dbReference type="SUPFAM" id="SSF50486">
    <property type="entry name" value="FMT C-terminal domain-like"/>
    <property type="match status" value="1"/>
</dbReference>
<dbReference type="SUPFAM" id="SSF53328">
    <property type="entry name" value="Formyltransferase"/>
    <property type="match status" value="1"/>
</dbReference>
<dbReference type="PROSITE" id="PS00373">
    <property type="entry name" value="GART"/>
    <property type="match status" value="1"/>
</dbReference>
<name>FMT_GEOMG</name>